<reference key="1">
    <citation type="journal article" date="1996" name="Genetics">
        <title>Duplicated proteasome subunit genes in Drosophila melanogaster encoding testes-specific isoforms.</title>
        <authorList>
            <person name="Yuan X."/>
            <person name="Miller M."/>
            <person name="Belote J.M."/>
        </authorList>
    </citation>
    <scope>NUCLEOTIDE SEQUENCE [GENOMIC DNA]</scope>
    <source>
        <tissue>Testis</tissue>
    </source>
</reference>
<reference key="2">
    <citation type="journal article" date="2004" name="Genetics">
        <title>Rapid evolution through gene duplication and subfunctionalization of the testes-specific alpha4 proteasome subunits in Drosophila.</title>
        <authorList>
            <person name="Torgerson D.G."/>
            <person name="Singh R.S."/>
        </authorList>
    </citation>
    <scope>NUCLEOTIDE SEQUENCE [GENOMIC DNA]</scope>
    <source>
        <strain>CPA-129</strain>
        <strain>CPA-46</strain>
        <strain>S-23</strain>
        <strain>Z(H)12</strain>
        <strain>Z(H)16</strain>
        <strain>Z(H)34</strain>
    </source>
</reference>
<reference key="3">
    <citation type="journal article" date="2000" name="Science">
        <title>The genome sequence of Drosophila melanogaster.</title>
        <authorList>
            <person name="Adams M.D."/>
            <person name="Celniker S.E."/>
            <person name="Holt R.A."/>
            <person name="Evans C.A."/>
            <person name="Gocayne J.D."/>
            <person name="Amanatides P.G."/>
            <person name="Scherer S.E."/>
            <person name="Li P.W."/>
            <person name="Hoskins R.A."/>
            <person name="Galle R.F."/>
            <person name="George R.A."/>
            <person name="Lewis S.E."/>
            <person name="Richards S."/>
            <person name="Ashburner M."/>
            <person name="Henderson S.N."/>
            <person name="Sutton G.G."/>
            <person name="Wortman J.R."/>
            <person name="Yandell M.D."/>
            <person name="Zhang Q."/>
            <person name="Chen L.X."/>
            <person name="Brandon R.C."/>
            <person name="Rogers Y.-H.C."/>
            <person name="Blazej R.G."/>
            <person name="Champe M."/>
            <person name="Pfeiffer B.D."/>
            <person name="Wan K.H."/>
            <person name="Doyle C."/>
            <person name="Baxter E.G."/>
            <person name="Helt G."/>
            <person name="Nelson C.R."/>
            <person name="Miklos G.L.G."/>
            <person name="Abril J.F."/>
            <person name="Agbayani A."/>
            <person name="An H.-J."/>
            <person name="Andrews-Pfannkoch C."/>
            <person name="Baldwin D."/>
            <person name="Ballew R.M."/>
            <person name="Basu A."/>
            <person name="Baxendale J."/>
            <person name="Bayraktaroglu L."/>
            <person name="Beasley E.M."/>
            <person name="Beeson K.Y."/>
            <person name="Benos P.V."/>
            <person name="Berman B.P."/>
            <person name="Bhandari D."/>
            <person name="Bolshakov S."/>
            <person name="Borkova D."/>
            <person name="Botchan M.R."/>
            <person name="Bouck J."/>
            <person name="Brokstein P."/>
            <person name="Brottier P."/>
            <person name="Burtis K.C."/>
            <person name="Busam D.A."/>
            <person name="Butler H."/>
            <person name="Cadieu E."/>
            <person name="Center A."/>
            <person name="Chandra I."/>
            <person name="Cherry J.M."/>
            <person name="Cawley S."/>
            <person name="Dahlke C."/>
            <person name="Davenport L.B."/>
            <person name="Davies P."/>
            <person name="de Pablos B."/>
            <person name="Delcher A."/>
            <person name="Deng Z."/>
            <person name="Mays A.D."/>
            <person name="Dew I."/>
            <person name="Dietz S.M."/>
            <person name="Dodson K."/>
            <person name="Doup L.E."/>
            <person name="Downes M."/>
            <person name="Dugan-Rocha S."/>
            <person name="Dunkov B.C."/>
            <person name="Dunn P."/>
            <person name="Durbin K.J."/>
            <person name="Evangelista C.C."/>
            <person name="Ferraz C."/>
            <person name="Ferriera S."/>
            <person name="Fleischmann W."/>
            <person name="Fosler C."/>
            <person name="Gabrielian A.E."/>
            <person name="Garg N.S."/>
            <person name="Gelbart W.M."/>
            <person name="Glasser K."/>
            <person name="Glodek A."/>
            <person name="Gong F."/>
            <person name="Gorrell J.H."/>
            <person name="Gu Z."/>
            <person name="Guan P."/>
            <person name="Harris M."/>
            <person name="Harris N.L."/>
            <person name="Harvey D.A."/>
            <person name="Heiman T.J."/>
            <person name="Hernandez J.R."/>
            <person name="Houck J."/>
            <person name="Hostin D."/>
            <person name="Houston K.A."/>
            <person name="Howland T.J."/>
            <person name="Wei M.-H."/>
            <person name="Ibegwam C."/>
            <person name="Jalali M."/>
            <person name="Kalush F."/>
            <person name="Karpen G.H."/>
            <person name="Ke Z."/>
            <person name="Kennison J.A."/>
            <person name="Ketchum K.A."/>
            <person name="Kimmel B.E."/>
            <person name="Kodira C.D."/>
            <person name="Kraft C.L."/>
            <person name="Kravitz S."/>
            <person name="Kulp D."/>
            <person name="Lai Z."/>
            <person name="Lasko P."/>
            <person name="Lei Y."/>
            <person name="Levitsky A.A."/>
            <person name="Li J.H."/>
            <person name="Li Z."/>
            <person name="Liang Y."/>
            <person name="Lin X."/>
            <person name="Liu X."/>
            <person name="Mattei B."/>
            <person name="McIntosh T.C."/>
            <person name="McLeod M.P."/>
            <person name="McPherson D."/>
            <person name="Merkulov G."/>
            <person name="Milshina N.V."/>
            <person name="Mobarry C."/>
            <person name="Morris J."/>
            <person name="Moshrefi A."/>
            <person name="Mount S.M."/>
            <person name="Moy M."/>
            <person name="Murphy B."/>
            <person name="Murphy L."/>
            <person name="Muzny D.M."/>
            <person name="Nelson D.L."/>
            <person name="Nelson D.R."/>
            <person name="Nelson K.A."/>
            <person name="Nixon K."/>
            <person name="Nusskern D.R."/>
            <person name="Pacleb J.M."/>
            <person name="Palazzolo M."/>
            <person name="Pittman G.S."/>
            <person name="Pan S."/>
            <person name="Pollard J."/>
            <person name="Puri V."/>
            <person name="Reese M.G."/>
            <person name="Reinert K."/>
            <person name="Remington K."/>
            <person name="Saunders R.D.C."/>
            <person name="Scheeler F."/>
            <person name="Shen H."/>
            <person name="Shue B.C."/>
            <person name="Siden-Kiamos I."/>
            <person name="Simpson M."/>
            <person name="Skupski M.P."/>
            <person name="Smith T.J."/>
            <person name="Spier E."/>
            <person name="Spradling A.C."/>
            <person name="Stapleton M."/>
            <person name="Strong R."/>
            <person name="Sun E."/>
            <person name="Svirskas R."/>
            <person name="Tector C."/>
            <person name="Turner R."/>
            <person name="Venter E."/>
            <person name="Wang A.H."/>
            <person name="Wang X."/>
            <person name="Wang Z.-Y."/>
            <person name="Wassarman D.A."/>
            <person name="Weinstock G.M."/>
            <person name="Weissenbach J."/>
            <person name="Williams S.M."/>
            <person name="Woodage T."/>
            <person name="Worley K.C."/>
            <person name="Wu D."/>
            <person name="Yang S."/>
            <person name="Yao Q.A."/>
            <person name="Ye J."/>
            <person name="Yeh R.-F."/>
            <person name="Zaveri J.S."/>
            <person name="Zhan M."/>
            <person name="Zhang G."/>
            <person name="Zhao Q."/>
            <person name="Zheng L."/>
            <person name="Zheng X.H."/>
            <person name="Zhong F.N."/>
            <person name="Zhong W."/>
            <person name="Zhou X."/>
            <person name="Zhu S.C."/>
            <person name="Zhu X."/>
            <person name="Smith H.O."/>
            <person name="Gibbs R.A."/>
            <person name="Myers E.W."/>
            <person name="Rubin G.M."/>
            <person name="Venter J.C."/>
        </authorList>
    </citation>
    <scope>NUCLEOTIDE SEQUENCE [LARGE SCALE GENOMIC DNA]</scope>
    <source>
        <strain>Berkeley</strain>
    </source>
</reference>
<reference key="4">
    <citation type="journal article" date="2002" name="Genome Biol.">
        <title>Annotation of the Drosophila melanogaster euchromatic genome: a systematic review.</title>
        <authorList>
            <person name="Misra S."/>
            <person name="Crosby M.A."/>
            <person name="Mungall C.J."/>
            <person name="Matthews B.B."/>
            <person name="Campbell K.S."/>
            <person name="Hradecky P."/>
            <person name="Huang Y."/>
            <person name="Kaminker J.S."/>
            <person name="Millburn G.H."/>
            <person name="Prochnik S.E."/>
            <person name="Smith C.D."/>
            <person name="Tupy J.L."/>
            <person name="Whitfield E.J."/>
            <person name="Bayraktaroglu L."/>
            <person name="Berman B.P."/>
            <person name="Bettencourt B.R."/>
            <person name="Celniker S.E."/>
            <person name="de Grey A.D.N.J."/>
            <person name="Drysdale R.A."/>
            <person name="Harris N.L."/>
            <person name="Richter J."/>
            <person name="Russo S."/>
            <person name="Schroeder A.J."/>
            <person name="Shu S.Q."/>
            <person name="Stapleton M."/>
            <person name="Yamada C."/>
            <person name="Ashburner M."/>
            <person name="Gelbart W.M."/>
            <person name="Rubin G.M."/>
            <person name="Lewis S.E."/>
        </authorList>
    </citation>
    <scope>GENOME REANNOTATION</scope>
    <source>
        <strain>Berkeley</strain>
    </source>
</reference>
<reference key="5">
    <citation type="journal article" date="2002" name="Genome Biol.">
        <title>A Drosophila full-length cDNA resource.</title>
        <authorList>
            <person name="Stapleton M."/>
            <person name="Carlson J.W."/>
            <person name="Brokstein P."/>
            <person name="Yu C."/>
            <person name="Champe M."/>
            <person name="George R.A."/>
            <person name="Guarin H."/>
            <person name="Kronmiller B."/>
            <person name="Pacleb J.M."/>
            <person name="Park S."/>
            <person name="Wan K.H."/>
            <person name="Rubin G.M."/>
            <person name="Celniker S.E."/>
        </authorList>
    </citation>
    <scope>NUCLEOTIDE SEQUENCE [LARGE SCALE MRNA]</scope>
    <source>
        <strain>Berkeley</strain>
        <tissue>Testis</tissue>
    </source>
</reference>
<evidence type="ECO:0000250" key="1"/>
<evidence type="ECO:0000255" key="2">
    <source>
        <dbReference type="PROSITE-ProRule" id="PRU00808"/>
    </source>
</evidence>
<evidence type="ECO:0000305" key="3"/>
<proteinExistence type="evidence at transcript level"/>
<dbReference type="EMBL" id="U46009">
    <property type="protein sequence ID" value="AAC47281.1"/>
    <property type="molecule type" value="Genomic_DNA"/>
</dbReference>
<dbReference type="EMBL" id="AY542417">
    <property type="protein sequence ID" value="AAS86225.1"/>
    <property type="molecule type" value="Genomic_DNA"/>
</dbReference>
<dbReference type="EMBL" id="AY542418">
    <property type="protein sequence ID" value="AAS86226.1"/>
    <property type="molecule type" value="Genomic_DNA"/>
</dbReference>
<dbReference type="EMBL" id="AY542421">
    <property type="protein sequence ID" value="AAS86229.1"/>
    <property type="molecule type" value="Genomic_DNA"/>
</dbReference>
<dbReference type="EMBL" id="AY542422">
    <property type="protein sequence ID" value="AAS86230.1"/>
    <property type="molecule type" value="Genomic_DNA"/>
</dbReference>
<dbReference type="EMBL" id="AY542423">
    <property type="protein sequence ID" value="AAS86231.1"/>
    <property type="molecule type" value="Genomic_DNA"/>
</dbReference>
<dbReference type="EMBL" id="AY542424">
    <property type="protein sequence ID" value="AAS86232.1"/>
    <property type="molecule type" value="Genomic_DNA"/>
</dbReference>
<dbReference type="EMBL" id="AY542425">
    <property type="protein sequence ID" value="AAS86233.1"/>
    <property type="molecule type" value="Genomic_DNA"/>
</dbReference>
<dbReference type="EMBL" id="AY542426">
    <property type="protein sequence ID" value="AAS86234.1"/>
    <property type="molecule type" value="Genomic_DNA"/>
</dbReference>
<dbReference type="EMBL" id="AY542427">
    <property type="protein sequence ID" value="AAS86235.1"/>
    <property type="molecule type" value="Genomic_DNA"/>
</dbReference>
<dbReference type="EMBL" id="AE013599">
    <property type="protein sequence ID" value="AAF47215.1"/>
    <property type="molecule type" value="Genomic_DNA"/>
</dbReference>
<dbReference type="EMBL" id="AY089456">
    <property type="protein sequence ID" value="AAL90194.1"/>
    <property type="molecule type" value="mRNA"/>
</dbReference>
<dbReference type="PIR" id="S72226">
    <property type="entry name" value="S72226"/>
</dbReference>
<dbReference type="RefSeq" id="NP_001286844.1">
    <property type="nucleotide sequence ID" value="NM_001299915.1"/>
</dbReference>
<dbReference type="RefSeq" id="NP_611920.1">
    <property type="nucleotide sequence ID" value="NM_138076.4"/>
</dbReference>
<dbReference type="SMR" id="Q27575"/>
<dbReference type="ComplexPortal" id="CPX-9087">
    <property type="entry name" value="26S proteasome complex, testis-specific variant"/>
</dbReference>
<dbReference type="FunCoup" id="Q27575">
    <property type="interactions" value="458"/>
</dbReference>
<dbReference type="STRING" id="7227.FBpp0310089"/>
<dbReference type="PaxDb" id="7227-FBpp0072257"/>
<dbReference type="DNASU" id="37910"/>
<dbReference type="EnsemblMetazoa" id="FBtr0072350">
    <property type="protein sequence ID" value="FBpp0072257"/>
    <property type="gene ID" value="FBgn0017556"/>
</dbReference>
<dbReference type="EnsemblMetazoa" id="FBtr0343481">
    <property type="protein sequence ID" value="FBpp0310089"/>
    <property type="gene ID" value="FBgn0017556"/>
</dbReference>
<dbReference type="GeneID" id="37910"/>
<dbReference type="KEGG" id="dme:Dmel_CG4569"/>
<dbReference type="AGR" id="FB:FBgn0017556"/>
<dbReference type="CTD" id="37910"/>
<dbReference type="FlyBase" id="FBgn0017556">
    <property type="gene designation" value="Prosalpha4T2"/>
</dbReference>
<dbReference type="VEuPathDB" id="VectorBase:FBgn0017556"/>
<dbReference type="eggNOG" id="KOG0183">
    <property type="taxonomic scope" value="Eukaryota"/>
</dbReference>
<dbReference type="GeneTree" id="ENSGT00940000167759"/>
<dbReference type="HOGENOM" id="CLU_035750_4_0_1"/>
<dbReference type="InParanoid" id="Q27575"/>
<dbReference type="OMA" id="KYKQPLR"/>
<dbReference type="OrthoDB" id="431557at2759"/>
<dbReference type="PhylomeDB" id="Q27575"/>
<dbReference type="BioGRID-ORCS" id="37910">
    <property type="hits" value="0 hits in 3 CRISPR screens"/>
</dbReference>
<dbReference type="GenomeRNAi" id="37910"/>
<dbReference type="PRO" id="PR:Q27575"/>
<dbReference type="Proteomes" id="UP000000803">
    <property type="component" value="Chromosome 2R"/>
</dbReference>
<dbReference type="Bgee" id="FBgn0017556">
    <property type="expression patterns" value="Expressed in early elongation stage spermatid (Drosophila) in testis and 21 other cell types or tissues"/>
</dbReference>
<dbReference type="ExpressionAtlas" id="Q27575">
    <property type="expression patterns" value="baseline and differential"/>
</dbReference>
<dbReference type="GO" id="GO:0005737">
    <property type="term" value="C:cytoplasm"/>
    <property type="evidence" value="ECO:0007669"/>
    <property type="project" value="UniProtKB-SubCell"/>
</dbReference>
<dbReference type="GO" id="GO:0005634">
    <property type="term" value="C:nucleus"/>
    <property type="evidence" value="ECO:0000318"/>
    <property type="project" value="GO_Central"/>
</dbReference>
<dbReference type="GO" id="GO:0019773">
    <property type="term" value="C:proteasome core complex, alpha-subunit complex"/>
    <property type="evidence" value="ECO:0000250"/>
    <property type="project" value="UniProtKB"/>
</dbReference>
<dbReference type="GO" id="GO:0043161">
    <property type="term" value="P:proteasome-mediated ubiquitin-dependent protein catabolic process"/>
    <property type="evidence" value="ECO:0000250"/>
    <property type="project" value="FlyBase"/>
</dbReference>
<dbReference type="FunFam" id="3.60.20.10:FF:000004">
    <property type="entry name" value="Proteasome subunit alpha type-4"/>
    <property type="match status" value="1"/>
</dbReference>
<dbReference type="Gene3D" id="3.60.20.10">
    <property type="entry name" value="Glutamine Phosphoribosylpyrophosphate, subunit 1, domain 1"/>
    <property type="match status" value="1"/>
</dbReference>
<dbReference type="InterPro" id="IPR029055">
    <property type="entry name" value="Ntn_hydrolases_N"/>
</dbReference>
<dbReference type="InterPro" id="IPR050115">
    <property type="entry name" value="Proteasome_alpha"/>
</dbReference>
<dbReference type="InterPro" id="IPR023332">
    <property type="entry name" value="Proteasome_alpha-type"/>
</dbReference>
<dbReference type="InterPro" id="IPR000426">
    <property type="entry name" value="Proteasome_asu_N"/>
</dbReference>
<dbReference type="InterPro" id="IPR001353">
    <property type="entry name" value="Proteasome_sua/b"/>
</dbReference>
<dbReference type="NCBIfam" id="NF003075">
    <property type="entry name" value="PRK03996.1"/>
    <property type="match status" value="1"/>
</dbReference>
<dbReference type="PANTHER" id="PTHR11599">
    <property type="entry name" value="PROTEASOME SUBUNIT ALPHA/BETA"/>
    <property type="match status" value="1"/>
</dbReference>
<dbReference type="Pfam" id="PF00227">
    <property type="entry name" value="Proteasome"/>
    <property type="match status" value="1"/>
</dbReference>
<dbReference type="Pfam" id="PF10584">
    <property type="entry name" value="Proteasome_A_N"/>
    <property type="match status" value="1"/>
</dbReference>
<dbReference type="SMART" id="SM00948">
    <property type="entry name" value="Proteasome_A_N"/>
    <property type="match status" value="1"/>
</dbReference>
<dbReference type="SUPFAM" id="SSF56235">
    <property type="entry name" value="N-terminal nucleophile aminohydrolases (Ntn hydrolases)"/>
    <property type="match status" value="1"/>
</dbReference>
<dbReference type="PROSITE" id="PS00388">
    <property type="entry name" value="PROTEASOME_ALPHA_1"/>
    <property type="match status" value="1"/>
</dbReference>
<dbReference type="PROSITE" id="PS51475">
    <property type="entry name" value="PROTEASOME_ALPHA_2"/>
    <property type="match status" value="1"/>
</dbReference>
<keyword id="KW-0963">Cytoplasm</keyword>
<keyword id="KW-0539">Nucleus</keyword>
<keyword id="KW-0647">Proteasome</keyword>
<keyword id="KW-1185">Reference proteome</keyword>
<gene>
    <name type="primary">Prosalpha4T2</name>
    <name type="synonym">Pros28.1B</name>
    <name type="ORF">CG4569</name>
</gene>
<comment type="function">
    <text>The proteasome is a multicatalytic proteinase complex which is characterized by its ability to cleave peptides with Arg, Phe, Tyr, Leu, and Glu adjacent to the leaving group at neutral or slightly basic pH. The proteasome has an ATP-dependent proteolytic activity.</text>
</comment>
<comment type="subunit">
    <text evidence="1">The 26S proteasome consists of a 20S proteasome core and two 19S regulatory subunits. The 20S proteasome core is composed of 28 subunits that are arranged in four stacked rings, resulting in a barrel-shaped structure. The two end rings are each formed by seven alpha subunits, and the two central rings are each formed by seven beta subunits. The catalytic chamber with the active sites is on the inside of the barrel (By similarity).</text>
</comment>
<comment type="subcellular location">
    <subcellularLocation>
        <location evidence="1">Cytoplasm</location>
    </subcellularLocation>
    <subcellularLocation>
        <location evidence="1">Nucleus</location>
    </subcellularLocation>
</comment>
<comment type="tissue specificity">
    <text>Testis specific.</text>
</comment>
<comment type="similarity">
    <text evidence="2">Belongs to the peptidase T1A family.</text>
</comment>
<feature type="chain" id="PRO_0000124155" description="Proteasome subunit alpha type-7-1B">
    <location>
        <begin position="1"/>
        <end position="252"/>
    </location>
</feature>
<feature type="sequence variant" description="In strain: S-23.">
    <original>I</original>
    <variation>L</variation>
    <location>
        <position position="45"/>
    </location>
</feature>
<feature type="sequence variant" description="In strain: S-23.">
    <original>I</original>
    <variation>V</variation>
    <location>
        <position position="191"/>
    </location>
</feature>
<feature type="sequence variant" description="In strain: S-23.">
    <original>V</original>
    <variation>E</variation>
    <location>
        <position position="213"/>
    </location>
</feature>
<feature type="sequence variant" description="In strain: S-23.">
    <original>D</original>
    <variation>A</variation>
    <location>
        <position position="241"/>
    </location>
</feature>
<feature type="sequence conflict" description="In Ref. 1; AAC47281." evidence="3" ref="1">
    <original>QR</original>
    <variation>HG</variation>
    <location>
        <begin position="3"/>
        <end position="4"/>
    </location>
</feature>
<feature type="sequence conflict" description="In Ref. 1; AAC47281." evidence="3" ref="1">
    <original>AAA</original>
    <variation>RG</variation>
    <location>
        <begin position="188"/>
        <end position="190"/>
    </location>
</feature>
<feature type="sequence conflict" description="In Ref. 5; AAL90194." evidence="3" ref="5">
    <original>K</original>
    <variation>N</variation>
    <location>
        <position position="215"/>
    </location>
</feature>
<feature type="sequence conflict" description="In Ref. 1; AAC47281." evidence="3" ref="1">
    <original>AEASRRP</original>
    <variation>PSESA</variation>
    <location>
        <begin position="243"/>
        <end position="249"/>
    </location>
</feature>
<feature type="sequence conflict" description="In Ref. 5; AAL90194." evidence="3" ref="5">
    <original>A</original>
    <variation>V</variation>
    <location>
        <position position="245"/>
    </location>
</feature>
<sequence>MAQRYDRAVTIYSPDGHLLQVEYAQEAVRRGSTVMGLRTNNAIVIGVEKRSVGDLQEERMVRKICMLDDHVVMTFSGLTADARILVSRAQMEAQSHRLNFEKPTTVEYITRYIAQLKQNYTQSNGRRPFGLSCLVGGFDEDGTPHLFQTDPSGIFYEWRANTTGRSSQPVRDYMEKHADEILTIADEAAAIKHIVRTLVSVSSLNHTQMEVAVLKYRQPLRMIDHQVLADLERTVRREIEDEAEASRRPRAP</sequence>
<accession>Q27575</accession>
<accession>Q6QH11</accession>
<accession>Q8T3X2</accession>
<accession>Q9W162</accession>
<name>PSA73_DROME</name>
<organism>
    <name type="scientific">Drosophila melanogaster</name>
    <name type="common">Fruit fly</name>
    <dbReference type="NCBI Taxonomy" id="7227"/>
    <lineage>
        <taxon>Eukaryota</taxon>
        <taxon>Metazoa</taxon>
        <taxon>Ecdysozoa</taxon>
        <taxon>Arthropoda</taxon>
        <taxon>Hexapoda</taxon>
        <taxon>Insecta</taxon>
        <taxon>Pterygota</taxon>
        <taxon>Neoptera</taxon>
        <taxon>Endopterygota</taxon>
        <taxon>Diptera</taxon>
        <taxon>Brachycera</taxon>
        <taxon>Muscomorpha</taxon>
        <taxon>Ephydroidea</taxon>
        <taxon>Drosophilidae</taxon>
        <taxon>Drosophila</taxon>
        <taxon>Sophophora</taxon>
    </lineage>
</organism>
<protein>
    <recommendedName>
        <fullName>Proteasome subunit alpha type-7-1B</fullName>
    </recommendedName>
    <alternativeName>
        <fullName>Testis-specific alpha4-t2 proteasome subunit</fullName>
    </alternativeName>
    <alternativeName>
        <fullName>Testis-specific proteasome 28 kDa subunit 1B</fullName>
    </alternativeName>
</protein>